<accession>Q8XXP6</accession>
<sequence length="717" mass="77193">MFNKIVKEFQWGNHKVRMETGEIARQASGAVLLDMDDTVVLATVVGAKNAKPGQDFFPLTVDYIEKTYAAGKIPGGFFKREGRPSENETLTSRLIDRPLRPLFPEGFYNEVQVVIHVLSINPEVPADIPALVAASAALAVSGLPFNGPVGAARVGYKDGQYLLNPNRAQLAHSDLDLVVAGTERAVLMVESEANQLSEEVMLGAVVYGHEQMQIAINAIHDLVRDGGKPEWDWQAAPKNEALVAKVSELGLADLQAAYQLRQKSARSQKLKEVYASVAAKLAEAGVEADGVEVDNILFELESKIVRGQILNGEPRIDGRDTRTVRPIEIRSSVLPRAHGSALFTRGETQALVVATLGTKSDEQIIDALQGEYRDRFMLHYNMPPFATGETGRVGSPKRREIGHGRLAKRALIPVLPKEDEFAYTIRLVSEITESNGSSSMASVCGGCLALMDAGVPVKAHVAGVAMGLILEGNKFAVLTDILGDEDHLGDMDFKVAGTDNGITALQMDIKVQGITKEIMQVALAQAKEGRLHILGKMQAAMGHARTELSEHAPRMITVKINPEKIRDVIGKGGSTIQALTKETGCTIDIQEDGTITIASTSSEGMAEAKRRIEGITAEAEVGKIYSGTVLKLLDFGAIVNILPGKDGLLHISEIANERVNQVSDYVKEGQMVRVKLLSTDEKGRMRLSIKAAKAEEGDVPATAPQAPGAGDATSQQQ</sequence>
<proteinExistence type="inferred from homology"/>
<keyword id="KW-0963">Cytoplasm</keyword>
<keyword id="KW-0460">Magnesium</keyword>
<keyword id="KW-0479">Metal-binding</keyword>
<keyword id="KW-0548">Nucleotidyltransferase</keyword>
<keyword id="KW-1185">Reference proteome</keyword>
<keyword id="KW-0694">RNA-binding</keyword>
<keyword id="KW-0808">Transferase</keyword>
<gene>
    <name evidence="1" type="primary">pnp</name>
    <name type="ordered locus">RSc2067</name>
</gene>
<organism>
    <name type="scientific">Ralstonia nicotianae (strain ATCC BAA-1114 / GMI1000)</name>
    <name type="common">Ralstonia solanacearum</name>
    <dbReference type="NCBI Taxonomy" id="267608"/>
    <lineage>
        <taxon>Bacteria</taxon>
        <taxon>Pseudomonadati</taxon>
        <taxon>Pseudomonadota</taxon>
        <taxon>Betaproteobacteria</taxon>
        <taxon>Burkholderiales</taxon>
        <taxon>Burkholderiaceae</taxon>
        <taxon>Ralstonia</taxon>
        <taxon>Ralstonia solanacearum species complex</taxon>
    </lineage>
</organism>
<feature type="chain" id="PRO_0000329797" description="Polyribonucleotide nucleotidyltransferase">
    <location>
        <begin position="1"/>
        <end position="717"/>
    </location>
</feature>
<feature type="domain" description="KH" evidence="1">
    <location>
        <begin position="553"/>
        <end position="612"/>
    </location>
</feature>
<feature type="domain" description="S1 motif" evidence="1">
    <location>
        <begin position="622"/>
        <end position="690"/>
    </location>
</feature>
<feature type="region of interest" description="Disordered" evidence="2">
    <location>
        <begin position="690"/>
        <end position="717"/>
    </location>
</feature>
<feature type="binding site" evidence="1">
    <location>
        <position position="486"/>
    </location>
    <ligand>
        <name>Mg(2+)</name>
        <dbReference type="ChEBI" id="CHEBI:18420"/>
    </ligand>
</feature>
<feature type="binding site" evidence="1">
    <location>
        <position position="492"/>
    </location>
    <ligand>
        <name>Mg(2+)</name>
        <dbReference type="ChEBI" id="CHEBI:18420"/>
    </ligand>
</feature>
<name>PNP_RALN1</name>
<reference key="1">
    <citation type="journal article" date="2002" name="Nature">
        <title>Genome sequence of the plant pathogen Ralstonia solanacearum.</title>
        <authorList>
            <person name="Salanoubat M."/>
            <person name="Genin S."/>
            <person name="Artiguenave F."/>
            <person name="Gouzy J."/>
            <person name="Mangenot S."/>
            <person name="Arlat M."/>
            <person name="Billault A."/>
            <person name="Brottier P."/>
            <person name="Camus J.-C."/>
            <person name="Cattolico L."/>
            <person name="Chandler M."/>
            <person name="Choisne N."/>
            <person name="Claudel-Renard C."/>
            <person name="Cunnac S."/>
            <person name="Demange N."/>
            <person name="Gaspin C."/>
            <person name="Lavie M."/>
            <person name="Moisan A."/>
            <person name="Robert C."/>
            <person name="Saurin W."/>
            <person name="Schiex T."/>
            <person name="Siguier P."/>
            <person name="Thebault P."/>
            <person name="Whalen M."/>
            <person name="Wincker P."/>
            <person name="Levy M."/>
            <person name="Weissenbach J."/>
            <person name="Boucher C.A."/>
        </authorList>
    </citation>
    <scope>NUCLEOTIDE SEQUENCE [LARGE SCALE GENOMIC DNA]</scope>
    <source>
        <strain>ATCC BAA-1114 / GMI1000</strain>
    </source>
</reference>
<evidence type="ECO:0000255" key="1">
    <source>
        <dbReference type="HAMAP-Rule" id="MF_01595"/>
    </source>
</evidence>
<evidence type="ECO:0000256" key="2">
    <source>
        <dbReference type="SAM" id="MobiDB-lite"/>
    </source>
</evidence>
<protein>
    <recommendedName>
        <fullName evidence="1">Polyribonucleotide nucleotidyltransferase</fullName>
        <ecNumber evidence="1">2.7.7.8</ecNumber>
    </recommendedName>
    <alternativeName>
        <fullName evidence="1">Polynucleotide phosphorylase</fullName>
        <shortName evidence="1">PNPase</shortName>
    </alternativeName>
</protein>
<comment type="function">
    <text evidence="1">Involved in mRNA degradation. Catalyzes the phosphorolysis of single-stranded polyribonucleotides processively in the 3'- to 5'-direction.</text>
</comment>
<comment type="catalytic activity">
    <reaction evidence="1">
        <text>RNA(n+1) + phosphate = RNA(n) + a ribonucleoside 5'-diphosphate</text>
        <dbReference type="Rhea" id="RHEA:22096"/>
        <dbReference type="Rhea" id="RHEA-COMP:14527"/>
        <dbReference type="Rhea" id="RHEA-COMP:17342"/>
        <dbReference type="ChEBI" id="CHEBI:43474"/>
        <dbReference type="ChEBI" id="CHEBI:57930"/>
        <dbReference type="ChEBI" id="CHEBI:140395"/>
        <dbReference type="EC" id="2.7.7.8"/>
    </reaction>
</comment>
<comment type="cofactor">
    <cofactor evidence="1">
        <name>Mg(2+)</name>
        <dbReference type="ChEBI" id="CHEBI:18420"/>
    </cofactor>
</comment>
<comment type="subcellular location">
    <subcellularLocation>
        <location evidence="1">Cytoplasm</location>
    </subcellularLocation>
</comment>
<comment type="similarity">
    <text evidence="1">Belongs to the polyribonucleotide nucleotidyltransferase family.</text>
</comment>
<dbReference type="EC" id="2.7.7.8" evidence="1"/>
<dbReference type="EMBL" id="AL646052">
    <property type="protein sequence ID" value="CAD15774.1"/>
    <property type="molecule type" value="Genomic_DNA"/>
</dbReference>
<dbReference type="RefSeq" id="WP_011001999.1">
    <property type="nucleotide sequence ID" value="NC_003295.1"/>
</dbReference>
<dbReference type="SMR" id="Q8XXP6"/>
<dbReference type="STRING" id="267608.RSc2067"/>
<dbReference type="EnsemblBacteria" id="CAD15774">
    <property type="protein sequence ID" value="CAD15774"/>
    <property type="gene ID" value="RSc2067"/>
</dbReference>
<dbReference type="KEGG" id="rso:RSc2067"/>
<dbReference type="eggNOG" id="COG1185">
    <property type="taxonomic scope" value="Bacteria"/>
</dbReference>
<dbReference type="HOGENOM" id="CLU_004217_2_2_4"/>
<dbReference type="Proteomes" id="UP000001436">
    <property type="component" value="Chromosome"/>
</dbReference>
<dbReference type="GO" id="GO:0005829">
    <property type="term" value="C:cytosol"/>
    <property type="evidence" value="ECO:0007669"/>
    <property type="project" value="TreeGrafter"/>
</dbReference>
<dbReference type="GO" id="GO:0000175">
    <property type="term" value="F:3'-5'-RNA exonuclease activity"/>
    <property type="evidence" value="ECO:0007669"/>
    <property type="project" value="TreeGrafter"/>
</dbReference>
<dbReference type="GO" id="GO:0000287">
    <property type="term" value="F:magnesium ion binding"/>
    <property type="evidence" value="ECO:0007669"/>
    <property type="project" value="UniProtKB-UniRule"/>
</dbReference>
<dbReference type="GO" id="GO:0004654">
    <property type="term" value="F:polyribonucleotide nucleotidyltransferase activity"/>
    <property type="evidence" value="ECO:0007669"/>
    <property type="project" value="UniProtKB-UniRule"/>
</dbReference>
<dbReference type="GO" id="GO:0003723">
    <property type="term" value="F:RNA binding"/>
    <property type="evidence" value="ECO:0007669"/>
    <property type="project" value="UniProtKB-UniRule"/>
</dbReference>
<dbReference type="GO" id="GO:0006402">
    <property type="term" value="P:mRNA catabolic process"/>
    <property type="evidence" value="ECO:0007669"/>
    <property type="project" value="UniProtKB-UniRule"/>
</dbReference>
<dbReference type="GO" id="GO:0006396">
    <property type="term" value="P:RNA processing"/>
    <property type="evidence" value="ECO:0007669"/>
    <property type="project" value="InterPro"/>
</dbReference>
<dbReference type="CDD" id="cd02393">
    <property type="entry name" value="KH-I_PNPase"/>
    <property type="match status" value="1"/>
</dbReference>
<dbReference type="CDD" id="cd11363">
    <property type="entry name" value="RNase_PH_PNPase_1"/>
    <property type="match status" value="1"/>
</dbReference>
<dbReference type="CDD" id="cd11364">
    <property type="entry name" value="RNase_PH_PNPase_2"/>
    <property type="match status" value="1"/>
</dbReference>
<dbReference type="CDD" id="cd04472">
    <property type="entry name" value="S1_PNPase"/>
    <property type="match status" value="1"/>
</dbReference>
<dbReference type="FunFam" id="3.30.1370.10:FF:000001">
    <property type="entry name" value="Polyribonucleotide nucleotidyltransferase"/>
    <property type="match status" value="1"/>
</dbReference>
<dbReference type="FunFam" id="3.30.230.70:FF:000001">
    <property type="entry name" value="Polyribonucleotide nucleotidyltransferase"/>
    <property type="match status" value="1"/>
</dbReference>
<dbReference type="FunFam" id="3.30.230.70:FF:000002">
    <property type="entry name" value="Polyribonucleotide nucleotidyltransferase"/>
    <property type="match status" value="1"/>
</dbReference>
<dbReference type="FunFam" id="2.40.50.140:FF:000189">
    <property type="entry name" value="Polyribonucleotide nucleotidyltransferase, putative"/>
    <property type="match status" value="1"/>
</dbReference>
<dbReference type="Gene3D" id="3.30.230.70">
    <property type="entry name" value="GHMP Kinase, N-terminal domain"/>
    <property type="match status" value="2"/>
</dbReference>
<dbReference type="Gene3D" id="3.30.1370.10">
    <property type="entry name" value="K Homology domain, type 1"/>
    <property type="match status" value="1"/>
</dbReference>
<dbReference type="Gene3D" id="2.40.50.140">
    <property type="entry name" value="Nucleic acid-binding proteins"/>
    <property type="match status" value="1"/>
</dbReference>
<dbReference type="HAMAP" id="MF_01595">
    <property type="entry name" value="PNPase"/>
    <property type="match status" value="1"/>
</dbReference>
<dbReference type="InterPro" id="IPR001247">
    <property type="entry name" value="ExoRNase_PH_dom1"/>
</dbReference>
<dbReference type="InterPro" id="IPR015847">
    <property type="entry name" value="ExoRNase_PH_dom2"/>
</dbReference>
<dbReference type="InterPro" id="IPR036345">
    <property type="entry name" value="ExoRNase_PH_dom2_sf"/>
</dbReference>
<dbReference type="InterPro" id="IPR004087">
    <property type="entry name" value="KH_dom"/>
</dbReference>
<dbReference type="InterPro" id="IPR004088">
    <property type="entry name" value="KH_dom_type_1"/>
</dbReference>
<dbReference type="InterPro" id="IPR036612">
    <property type="entry name" value="KH_dom_type_1_sf"/>
</dbReference>
<dbReference type="InterPro" id="IPR012340">
    <property type="entry name" value="NA-bd_OB-fold"/>
</dbReference>
<dbReference type="InterPro" id="IPR012162">
    <property type="entry name" value="PNPase"/>
</dbReference>
<dbReference type="InterPro" id="IPR027408">
    <property type="entry name" value="PNPase/RNase_PH_dom_sf"/>
</dbReference>
<dbReference type="InterPro" id="IPR015848">
    <property type="entry name" value="PNPase_PH_RNA-bd_bac/org-type"/>
</dbReference>
<dbReference type="InterPro" id="IPR036456">
    <property type="entry name" value="PNPase_PH_RNA-bd_sf"/>
</dbReference>
<dbReference type="InterPro" id="IPR020568">
    <property type="entry name" value="Ribosomal_Su5_D2-typ_SF"/>
</dbReference>
<dbReference type="InterPro" id="IPR003029">
    <property type="entry name" value="S1_domain"/>
</dbReference>
<dbReference type="NCBIfam" id="TIGR03591">
    <property type="entry name" value="polynuc_phos"/>
    <property type="match status" value="1"/>
</dbReference>
<dbReference type="NCBIfam" id="NF008805">
    <property type="entry name" value="PRK11824.1"/>
    <property type="match status" value="1"/>
</dbReference>
<dbReference type="PANTHER" id="PTHR11252">
    <property type="entry name" value="POLYRIBONUCLEOTIDE NUCLEOTIDYLTRANSFERASE"/>
    <property type="match status" value="1"/>
</dbReference>
<dbReference type="PANTHER" id="PTHR11252:SF0">
    <property type="entry name" value="POLYRIBONUCLEOTIDE NUCLEOTIDYLTRANSFERASE 1, MITOCHONDRIAL"/>
    <property type="match status" value="1"/>
</dbReference>
<dbReference type="Pfam" id="PF00013">
    <property type="entry name" value="KH_1"/>
    <property type="match status" value="1"/>
</dbReference>
<dbReference type="Pfam" id="PF03726">
    <property type="entry name" value="PNPase"/>
    <property type="match status" value="1"/>
</dbReference>
<dbReference type="Pfam" id="PF01138">
    <property type="entry name" value="RNase_PH"/>
    <property type="match status" value="2"/>
</dbReference>
<dbReference type="Pfam" id="PF03725">
    <property type="entry name" value="RNase_PH_C"/>
    <property type="match status" value="2"/>
</dbReference>
<dbReference type="Pfam" id="PF00575">
    <property type="entry name" value="S1"/>
    <property type="match status" value="1"/>
</dbReference>
<dbReference type="PIRSF" id="PIRSF005499">
    <property type="entry name" value="PNPase"/>
    <property type="match status" value="1"/>
</dbReference>
<dbReference type="SMART" id="SM00322">
    <property type="entry name" value="KH"/>
    <property type="match status" value="1"/>
</dbReference>
<dbReference type="SMART" id="SM00316">
    <property type="entry name" value="S1"/>
    <property type="match status" value="1"/>
</dbReference>
<dbReference type="SUPFAM" id="SSF54791">
    <property type="entry name" value="Eukaryotic type KH-domain (KH-domain type I)"/>
    <property type="match status" value="1"/>
</dbReference>
<dbReference type="SUPFAM" id="SSF50249">
    <property type="entry name" value="Nucleic acid-binding proteins"/>
    <property type="match status" value="1"/>
</dbReference>
<dbReference type="SUPFAM" id="SSF46915">
    <property type="entry name" value="Polynucleotide phosphorylase/guanosine pentaphosphate synthase (PNPase/GPSI), domain 3"/>
    <property type="match status" value="1"/>
</dbReference>
<dbReference type="SUPFAM" id="SSF55666">
    <property type="entry name" value="Ribonuclease PH domain 2-like"/>
    <property type="match status" value="2"/>
</dbReference>
<dbReference type="SUPFAM" id="SSF54211">
    <property type="entry name" value="Ribosomal protein S5 domain 2-like"/>
    <property type="match status" value="2"/>
</dbReference>
<dbReference type="PROSITE" id="PS50084">
    <property type="entry name" value="KH_TYPE_1"/>
    <property type="match status" value="1"/>
</dbReference>
<dbReference type="PROSITE" id="PS50126">
    <property type="entry name" value="S1"/>
    <property type="match status" value="1"/>
</dbReference>